<protein>
    <recommendedName>
        <fullName evidence="1">UDP-N-acetylmuramoylalanine--D-glutamate ligase</fullName>
        <ecNumber evidence="1">6.3.2.9</ecNumber>
    </recommendedName>
    <alternativeName>
        <fullName evidence="1">D-glutamic acid-adding enzyme</fullName>
    </alternativeName>
    <alternativeName>
        <fullName evidence="1">UDP-N-acetylmuramoyl-L-alanyl-D-glutamate synthetase</fullName>
    </alternativeName>
</protein>
<dbReference type="EC" id="6.3.2.9" evidence="1"/>
<dbReference type="EMBL" id="CP000024">
    <property type="protein sequence ID" value="AAV62324.1"/>
    <property type="molecule type" value="Genomic_DNA"/>
</dbReference>
<dbReference type="RefSeq" id="WP_011225774.1">
    <property type="nucleotide sequence ID" value="NC_006449.1"/>
</dbReference>
<dbReference type="SMR" id="Q5M0D5"/>
<dbReference type="GeneID" id="66898630"/>
<dbReference type="KEGG" id="stc:str0731"/>
<dbReference type="HOGENOM" id="CLU_032540_0_1_9"/>
<dbReference type="UniPathway" id="UPA00219"/>
<dbReference type="GO" id="GO:0005737">
    <property type="term" value="C:cytoplasm"/>
    <property type="evidence" value="ECO:0007669"/>
    <property type="project" value="UniProtKB-SubCell"/>
</dbReference>
<dbReference type="GO" id="GO:0005524">
    <property type="term" value="F:ATP binding"/>
    <property type="evidence" value="ECO:0007669"/>
    <property type="project" value="UniProtKB-UniRule"/>
</dbReference>
<dbReference type="GO" id="GO:0008764">
    <property type="term" value="F:UDP-N-acetylmuramoylalanine-D-glutamate ligase activity"/>
    <property type="evidence" value="ECO:0007669"/>
    <property type="project" value="UniProtKB-UniRule"/>
</dbReference>
<dbReference type="GO" id="GO:0051301">
    <property type="term" value="P:cell division"/>
    <property type="evidence" value="ECO:0007669"/>
    <property type="project" value="UniProtKB-KW"/>
</dbReference>
<dbReference type="GO" id="GO:0071555">
    <property type="term" value="P:cell wall organization"/>
    <property type="evidence" value="ECO:0007669"/>
    <property type="project" value="UniProtKB-KW"/>
</dbReference>
<dbReference type="GO" id="GO:0009252">
    <property type="term" value="P:peptidoglycan biosynthetic process"/>
    <property type="evidence" value="ECO:0007669"/>
    <property type="project" value="UniProtKB-UniRule"/>
</dbReference>
<dbReference type="GO" id="GO:0008360">
    <property type="term" value="P:regulation of cell shape"/>
    <property type="evidence" value="ECO:0007669"/>
    <property type="project" value="UniProtKB-KW"/>
</dbReference>
<dbReference type="Gene3D" id="3.90.190.20">
    <property type="entry name" value="Mur ligase, C-terminal domain"/>
    <property type="match status" value="1"/>
</dbReference>
<dbReference type="Gene3D" id="3.40.1190.10">
    <property type="entry name" value="Mur-like, catalytic domain"/>
    <property type="match status" value="1"/>
</dbReference>
<dbReference type="Gene3D" id="3.40.50.720">
    <property type="entry name" value="NAD(P)-binding Rossmann-like Domain"/>
    <property type="match status" value="1"/>
</dbReference>
<dbReference type="HAMAP" id="MF_00639">
    <property type="entry name" value="MurD"/>
    <property type="match status" value="1"/>
</dbReference>
<dbReference type="InterPro" id="IPR036565">
    <property type="entry name" value="Mur-like_cat_sf"/>
</dbReference>
<dbReference type="InterPro" id="IPR004101">
    <property type="entry name" value="Mur_ligase_C"/>
</dbReference>
<dbReference type="InterPro" id="IPR036615">
    <property type="entry name" value="Mur_ligase_C_dom_sf"/>
</dbReference>
<dbReference type="InterPro" id="IPR013221">
    <property type="entry name" value="Mur_ligase_cen"/>
</dbReference>
<dbReference type="InterPro" id="IPR005762">
    <property type="entry name" value="MurD"/>
</dbReference>
<dbReference type="NCBIfam" id="TIGR01087">
    <property type="entry name" value="murD"/>
    <property type="match status" value="1"/>
</dbReference>
<dbReference type="PANTHER" id="PTHR43692">
    <property type="entry name" value="UDP-N-ACETYLMURAMOYLALANINE--D-GLUTAMATE LIGASE"/>
    <property type="match status" value="1"/>
</dbReference>
<dbReference type="PANTHER" id="PTHR43692:SF1">
    <property type="entry name" value="UDP-N-ACETYLMURAMOYLALANINE--D-GLUTAMATE LIGASE"/>
    <property type="match status" value="1"/>
</dbReference>
<dbReference type="Pfam" id="PF02875">
    <property type="entry name" value="Mur_ligase_C"/>
    <property type="match status" value="1"/>
</dbReference>
<dbReference type="Pfam" id="PF08245">
    <property type="entry name" value="Mur_ligase_M"/>
    <property type="match status" value="1"/>
</dbReference>
<dbReference type="Pfam" id="PF21799">
    <property type="entry name" value="MurD-like_N"/>
    <property type="match status" value="1"/>
</dbReference>
<dbReference type="SUPFAM" id="SSF51984">
    <property type="entry name" value="MurCD N-terminal domain"/>
    <property type="match status" value="1"/>
</dbReference>
<dbReference type="SUPFAM" id="SSF53623">
    <property type="entry name" value="MurD-like peptide ligases, catalytic domain"/>
    <property type="match status" value="1"/>
</dbReference>
<dbReference type="SUPFAM" id="SSF53244">
    <property type="entry name" value="MurD-like peptide ligases, peptide-binding domain"/>
    <property type="match status" value="1"/>
</dbReference>
<comment type="function">
    <text evidence="1">Cell wall formation. Catalyzes the addition of glutamate to the nucleotide precursor UDP-N-acetylmuramoyl-L-alanine (UMA).</text>
</comment>
<comment type="catalytic activity">
    <reaction evidence="1">
        <text>UDP-N-acetyl-alpha-D-muramoyl-L-alanine + D-glutamate + ATP = UDP-N-acetyl-alpha-D-muramoyl-L-alanyl-D-glutamate + ADP + phosphate + H(+)</text>
        <dbReference type="Rhea" id="RHEA:16429"/>
        <dbReference type="ChEBI" id="CHEBI:15378"/>
        <dbReference type="ChEBI" id="CHEBI:29986"/>
        <dbReference type="ChEBI" id="CHEBI:30616"/>
        <dbReference type="ChEBI" id="CHEBI:43474"/>
        <dbReference type="ChEBI" id="CHEBI:83898"/>
        <dbReference type="ChEBI" id="CHEBI:83900"/>
        <dbReference type="ChEBI" id="CHEBI:456216"/>
        <dbReference type="EC" id="6.3.2.9"/>
    </reaction>
</comment>
<comment type="pathway">
    <text evidence="1">Cell wall biogenesis; peptidoglycan biosynthesis.</text>
</comment>
<comment type="subcellular location">
    <subcellularLocation>
        <location evidence="1">Cytoplasm</location>
    </subcellularLocation>
</comment>
<comment type="similarity">
    <text evidence="1">Belongs to the MurCDEF family.</text>
</comment>
<feature type="chain" id="PRO_0000109104" description="UDP-N-acetylmuramoylalanine--D-glutamate ligase">
    <location>
        <begin position="1"/>
        <end position="450"/>
    </location>
</feature>
<feature type="binding site" evidence="1">
    <location>
        <begin position="119"/>
        <end position="125"/>
    </location>
    <ligand>
        <name>ATP</name>
        <dbReference type="ChEBI" id="CHEBI:30616"/>
    </ligand>
</feature>
<keyword id="KW-0067">ATP-binding</keyword>
<keyword id="KW-0131">Cell cycle</keyword>
<keyword id="KW-0132">Cell division</keyword>
<keyword id="KW-0133">Cell shape</keyword>
<keyword id="KW-0961">Cell wall biogenesis/degradation</keyword>
<keyword id="KW-0963">Cytoplasm</keyword>
<keyword id="KW-0436">Ligase</keyword>
<keyword id="KW-0547">Nucleotide-binding</keyword>
<keyword id="KW-0573">Peptidoglycan synthesis</keyword>
<gene>
    <name evidence="1" type="primary">murD</name>
    <name type="ordered locus">str0731</name>
</gene>
<sequence>MKSITQLENKKVLVLGLAKSGEAAARLLAKLGAIVTVNDGKAFEENPSAQSLLEEGIKVVCGGHPLELLDENFELMVKNPGIRYDNPMVARALEKEIPVWTEVELAYLVSEAPIIGITGSNGKTTTTTMIADVLNHGGKSGVLSGNIGFPASEVAQSVTNQDTLVMELSSFQLMGIESFHPHIAVITNLMPTHIDYHGSFEEYVAAKWNIQNEMTSDDFIILNFNQDLAKELATQTNAQVVPFSTVEKVDGAYLENGGLYFKGELLMHADELGVPGSHNVENALATIAVAKLSGVSNQAIKETLSSFGGVKHRLQFVDTIDDVKFYNDSKSTNILATQKALSGFDNSKVILIAGGLDRGNEFDELIPDITGLKKMVILGESAPRVKRAADKAGVTYLDAKDVADATRIAFEQASAGDVVLLSPANASWDMYKNFEVRGDEFITTVERLKG</sequence>
<proteinExistence type="inferred from homology"/>
<reference key="1">
    <citation type="journal article" date="2004" name="Nat. Biotechnol.">
        <title>Complete sequence and comparative genome analysis of the dairy bacterium Streptococcus thermophilus.</title>
        <authorList>
            <person name="Bolotin A."/>
            <person name="Quinquis B."/>
            <person name="Renault P."/>
            <person name="Sorokin A."/>
            <person name="Ehrlich S.D."/>
            <person name="Kulakauskas S."/>
            <person name="Lapidus A."/>
            <person name="Goltsman E."/>
            <person name="Mazur M."/>
            <person name="Pusch G.D."/>
            <person name="Fonstein M."/>
            <person name="Overbeek R."/>
            <person name="Kyprides N."/>
            <person name="Purnelle B."/>
            <person name="Prozzi D."/>
            <person name="Ngui K."/>
            <person name="Masuy D."/>
            <person name="Hancy F."/>
            <person name="Burteau S."/>
            <person name="Boutry M."/>
            <person name="Delcour J."/>
            <person name="Goffeau A."/>
            <person name="Hols P."/>
        </authorList>
    </citation>
    <scope>NUCLEOTIDE SEQUENCE [LARGE SCALE GENOMIC DNA]</scope>
    <source>
        <strain>CNRZ 1066</strain>
    </source>
</reference>
<name>MURD_STRT1</name>
<accession>Q5M0D5</accession>
<organism>
    <name type="scientific">Streptococcus thermophilus (strain CNRZ 1066)</name>
    <dbReference type="NCBI Taxonomy" id="299768"/>
    <lineage>
        <taxon>Bacteria</taxon>
        <taxon>Bacillati</taxon>
        <taxon>Bacillota</taxon>
        <taxon>Bacilli</taxon>
        <taxon>Lactobacillales</taxon>
        <taxon>Streptococcaceae</taxon>
        <taxon>Streptococcus</taxon>
    </lineage>
</organism>
<evidence type="ECO:0000255" key="1">
    <source>
        <dbReference type="HAMAP-Rule" id="MF_00639"/>
    </source>
</evidence>